<accession>C4ZVM1</accession>
<reference key="1">
    <citation type="journal article" date="2009" name="J. Bacteriol.">
        <title>Genomic sequencing reveals regulatory mutations and recombinational events in the widely used MC4100 lineage of Escherichia coli K-12.</title>
        <authorList>
            <person name="Ferenci T."/>
            <person name="Zhou Z."/>
            <person name="Betteridge T."/>
            <person name="Ren Y."/>
            <person name="Liu Y."/>
            <person name="Feng L."/>
            <person name="Reeves P.R."/>
            <person name="Wang L."/>
        </authorList>
    </citation>
    <scope>NUCLEOTIDE SEQUENCE [LARGE SCALE GENOMIC DNA]</scope>
    <source>
        <strain>K12 / MC4100 / BW2952</strain>
    </source>
</reference>
<sequence>MNKTAIALLALLASSASLAATPWQKITQPVPGSAQSIGSFSNGCIVGADTLPIQSEHYQVMRTDQRRYFGHPDLVMFIQRLSSQVSNLGMGTVLIGDMGMPAGGRFNGGHASHQTGLDVDIFLQLPKTRWTSAQLLRPQALDLVSRDGKHVVSTLWKPEIFSLIKLAAQDKDVTRIFVNPAIKQQLCLDAGTDRDWLRKVRPWFQHRAHMHVRLRCPADSLECEDQPLPPSGDGCGAELQSWFEPPKPGTTKPEKKTPPPLPPSCQALLDEHVI</sequence>
<evidence type="ECO:0000255" key="1">
    <source>
        <dbReference type="HAMAP-Rule" id="MF_01623"/>
    </source>
</evidence>
<evidence type="ECO:0000256" key="2">
    <source>
        <dbReference type="SAM" id="MobiDB-lite"/>
    </source>
</evidence>
<keyword id="KW-1015">Disulfide bond</keyword>
<keyword id="KW-0378">Hydrolase</keyword>
<keyword id="KW-0479">Metal-binding</keyword>
<keyword id="KW-0482">Metalloprotease</keyword>
<keyword id="KW-0574">Periplasm</keyword>
<keyword id="KW-0645">Protease</keyword>
<keyword id="KW-0732">Signal</keyword>
<keyword id="KW-0862">Zinc</keyword>
<organism>
    <name type="scientific">Escherichia coli (strain K12 / MC4100 / BW2952)</name>
    <dbReference type="NCBI Taxonomy" id="595496"/>
    <lineage>
        <taxon>Bacteria</taxon>
        <taxon>Pseudomonadati</taxon>
        <taxon>Pseudomonadota</taxon>
        <taxon>Gammaproteobacteria</taxon>
        <taxon>Enterobacterales</taxon>
        <taxon>Enterobacteriaceae</taxon>
        <taxon>Escherichia</taxon>
    </lineage>
</organism>
<proteinExistence type="inferred from homology"/>
<gene>
    <name evidence="1" type="primary">mepA</name>
    <name type="ordered locus">BWG_2102</name>
</gene>
<feature type="signal peptide" evidence="1">
    <location>
        <begin position="1"/>
        <end position="19"/>
    </location>
</feature>
<feature type="chain" id="PRO_1000215742" description="Penicillin-insensitive murein endopeptidase">
    <location>
        <begin position="20"/>
        <end position="274"/>
    </location>
</feature>
<feature type="region of interest" description="Disordered" evidence="2">
    <location>
        <begin position="228"/>
        <end position="274"/>
    </location>
</feature>
<feature type="binding site" evidence="1">
    <location>
        <position position="110"/>
    </location>
    <ligand>
        <name>Zn(2+)</name>
        <dbReference type="ChEBI" id="CHEBI:29105"/>
        <label>1</label>
    </ligand>
</feature>
<feature type="binding site" evidence="1">
    <location>
        <position position="113"/>
    </location>
    <ligand>
        <name>Zn(2+)</name>
        <dbReference type="ChEBI" id="CHEBI:29105"/>
        <label>1</label>
    </ligand>
</feature>
<feature type="binding site" evidence="1">
    <location>
        <position position="120"/>
    </location>
    <ligand>
        <name>Zn(2+)</name>
        <dbReference type="ChEBI" id="CHEBI:29105"/>
        <label>1</label>
    </ligand>
</feature>
<feature type="binding site" evidence="1">
    <location>
        <position position="147"/>
    </location>
    <ligand>
        <name>Zn(2+)</name>
        <dbReference type="ChEBI" id="CHEBI:29105"/>
        <label>2</label>
    </ligand>
</feature>
<feature type="binding site" evidence="1">
    <location>
        <position position="150"/>
    </location>
    <ligand>
        <name>Zn(2+)</name>
        <dbReference type="ChEBI" id="CHEBI:29105"/>
        <label>2</label>
    </ligand>
</feature>
<feature type="binding site" evidence="1">
    <location>
        <position position="211"/>
    </location>
    <ligand>
        <name>Zn(2+)</name>
        <dbReference type="ChEBI" id="CHEBI:29105"/>
        <label>1</label>
    </ligand>
</feature>
<feature type="disulfide bond" evidence="1">
    <location>
        <begin position="44"/>
        <end position="265"/>
    </location>
</feature>
<feature type="disulfide bond" evidence="1">
    <location>
        <begin position="187"/>
        <end position="235"/>
    </location>
</feature>
<feature type="disulfide bond" evidence="1">
    <location>
        <begin position="216"/>
        <end position="223"/>
    </location>
</feature>
<comment type="function">
    <text evidence="1">Murein endopeptidase that cleaves the D-alanyl-meso-2,6-diamino-pimelyl amide bond that connects peptidoglycan strands. Likely plays a role in the removal of murein from the sacculus.</text>
</comment>
<comment type="cofactor">
    <cofactor evidence="1">
        <name>Zn(2+)</name>
        <dbReference type="ChEBI" id="CHEBI:29105"/>
    </cofactor>
    <text evidence="1">Binds 2 Zn(2+) ions per subunit. Zn(2+) ion 1 is bound in the active site. Zn(2+) ion 2 is bound at the dimer interface by residues from both subunits.</text>
</comment>
<comment type="subunit">
    <text evidence="1">Dimer.</text>
</comment>
<comment type="subcellular location">
    <subcellularLocation>
        <location evidence="1">Periplasm</location>
    </subcellularLocation>
</comment>
<comment type="similarity">
    <text evidence="1">Belongs to the peptidase M74 family.</text>
</comment>
<name>MEPA_ECOBW</name>
<protein>
    <recommendedName>
        <fullName evidence="1">Penicillin-insensitive murein endopeptidase</fullName>
        <ecNumber evidence="1">3.4.24.-</ecNumber>
    </recommendedName>
    <alternativeName>
        <fullName evidence="1">D-alanyl-D-alanine-endopeptidase</fullName>
        <shortName evidence="1">DD-endopeptidase</shortName>
    </alternativeName>
</protein>
<dbReference type="EC" id="3.4.24.-" evidence="1"/>
<dbReference type="EMBL" id="CP001396">
    <property type="protein sequence ID" value="ACR63829.1"/>
    <property type="molecule type" value="Genomic_DNA"/>
</dbReference>
<dbReference type="RefSeq" id="WP_001043825.1">
    <property type="nucleotide sequence ID" value="NC_012759.1"/>
</dbReference>
<dbReference type="SMR" id="C4ZVM1"/>
<dbReference type="MEROPS" id="M74.001"/>
<dbReference type="KEGG" id="ebw:BWG_2102"/>
<dbReference type="HOGENOM" id="CLU_052496_0_0_6"/>
<dbReference type="GO" id="GO:0030288">
    <property type="term" value="C:outer membrane-bounded periplasmic space"/>
    <property type="evidence" value="ECO:0007669"/>
    <property type="project" value="InterPro"/>
</dbReference>
<dbReference type="GO" id="GO:0046872">
    <property type="term" value="F:metal ion binding"/>
    <property type="evidence" value="ECO:0007669"/>
    <property type="project" value="UniProtKB-KW"/>
</dbReference>
<dbReference type="GO" id="GO:0004222">
    <property type="term" value="F:metalloendopeptidase activity"/>
    <property type="evidence" value="ECO:0007669"/>
    <property type="project" value="UniProtKB-UniRule"/>
</dbReference>
<dbReference type="GO" id="GO:0004252">
    <property type="term" value="F:serine-type endopeptidase activity"/>
    <property type="evidence" value="ECO:0007669"/>
    <property type="project" value="InterPro"/>
</dbReference>
<dbReference type="GO" id="GO:0000270">
    <property type="term" value="P:peptidoglycan metabolic process"/>
    <property type="evidence" value="ECO:0007669"/>
    <property type="project" value="UniProtKB-UniRule"/>
</dbReference>
<dbReference type="GO" id="GO:0006508">
    <property type="term" value="P:proteolysis"/>
    <property type="evidence" value="ECO:0007669"/>
    <property type="project" value="UniProtKB-KW"/>
</dbReference>
<dbReference type="FunFam" id="3.30.1380.10:FF:000002">
    <property type="entry name" value="Penicillin-insensitive murein endopeptidase"/>
    <property type="match status" value="1"/>
</dbReference>
<dbReference type="Gene3D" id="3.30.1380.10">
    <property type="match status" value="1"/>
</dbReference>
<dbReference type="HAMAP" id="MF_01623">
    <property type="entry name" value="MepA"/>
    <property type="match status" value="1"/>
</dbReference>
<dbReference type="InterPro" id="IPR009045">
    <property type="entry name" value="Hedgehog_sig/DD-Pept_Zn-bd_sf"/>
</dbReference>
<dbReference type="InterPro" id="IPR005073">
    <property type="entry name" value="Peptidase_M74"/>
</dbReference>
<dbReference type="NCBIfam" id="NF006947">
    <property type="entry name" value="PRK09429.1"/>
    <property type="match status" value="1"/>
</dbReference>
<dbReference type="Pfam" id="PF03411">
    <property type="entry name" value="Peptidase_M74"/>
    <property type="match status" value="1"/>
</dbReference>
<dbReference type="PIRSF" id="PIRSF018455">
    <property type="entry name" value="MepA"/>
    <property type="match status" value="1"/>
</dbReference>
<dbReference type="SUPFAM" id="SSF55166">
    <property type="entry name" value="Hedgehog/DD-peptidase"/>
    <property type="match status" value="1"/>
</dbReference>